<protein>
    <recommendedName>
        <fullName evidence="1">HTH-type transcriptional regulator UlaR</fullName>
    </recommendedName>
</protein>
<feature type="chain" id="PRO_1000190466" description="HTH-type transcriptional regulator UlaR">
    <location>
        <begin position="1"/>
        <end position="251"/>
    </location>
</feature>
<feature type="domain" description="HTH deoR-type" evidence="1">
    <location>
        <begin position="3"/>
        <end position="58"/>
    </location>
</feature>
<feature type="DNA-binding region" description="H-T-H motif" evidence="1">
    <location>
        <begin position="20"/>
        <end position="39"/>
    </location>
</feature>
<gene>
    <name evidence="1" type="primary">ulaR</name>
    <name type="ordered locus">ECDH10B_4386</name>
</gene>
<accession>B1XDU2</accession>
<comment type="function">
    <text evidence="1">Represses ulaG and the ulaABCDEF operon.</text>
</comment>
<comment type="subcellular location">
    <subcellularLocation>
        <location evidence="1">Cytoplasm</location>
    </subcellularLocation>
</comment>
<sequence>MTEAQRHQILLEMLAQLGFVTVEKVVERLGISPATARRDINKLDESGKLKKVRNGAEAITQQRPRWTPMNLHQAQNHDEKVRIAKAASQLVNPGESVVINCGSTAFLLGREMCGKPVQIITNYLPLANYLIDQEHDSVIIMGGQYNKSQSITLSPQGSENSLYAGHWMFTSGKGLTAEGLYKTDMLTAMAEQKMLSVVGKLVVLVDSSKIGERAGMLFSRADQIDMLITGKNANPEILQQLEAQGVSILRV</sequence>
<reference key="1">
    <citation type="journal article" date="2008" name="J. Bacteriol.">
        <title>The complete genome sequence of Escherichia coli DH10B: insights into the biology of a laboratory workhorse.</title>
        <authorList>
            <person name="Durfee T."/>
            <person name="Nelson R."/>
            <person name="Baldwin S."/>
            <person name="Plunkett G. III"/>
            <person name="Burland V."/>
            <person name="Mau B."/>
            <person name="Petrosino J.F."/>
            <person name="Qin X."/>
            <person name="Muzny D.M."/>
            <person name="Ayele M."/>
            <person name="Gibbs R.A."/>
            <person name="Csorgo B."/>
            <person name="Posfai G."/>
            <person name="Weinstock G.M."/>
            <person name="Blattner F.R."/>
        </authorList>
    </citation>
    <scope>NUCLEOTIDE SEQUENCE [LARGE SCALE GENOMIC DNA]</scope>
    <source>
        <strain>K12 / DH10B</strain>
    </source>
</reference>
<proteinExistence type="inferred from homology"/>
<name>ULAR_ECODH</name>
<evidence type="ECO:0000255" key="1">
    <source>
        <dbReference type="HAMAP-Rule" id="MF_01563"/>
    </source>
</evidence>
<dbReference type="EMBL" id="CP000948">
    <property type="protein sequence ID" value="ACB05179.1"/>
    <property type="molecule type" value="Genomic_DNA"/>
</dbReference>
<dbReference type="RefSeq" id="WP_000133631.1">
    <property type="nucleotide sequence ID" value="NC_010473.1"/>
</dbReference>
<dbReference type="SMR" id="B1XDU2"/>
<dbReference type="GeneID" id="75202425"/>
<dbReference type="KEGG" id="ecd:ECDH10B_4386"/>
<dbReference type="HOGENOM" id="CLU_060699_3_2_6"/>
<dbReference type="GO" id="GO:0005737">
    <property type="term" value="C:cytoplasm"/>
    <property type="evidence" value="ECO:0007669"/>
    <property type="project" value="UniProtKB-SubCell"/>
</dbReference>
<dbReference type="GO" id="GO:0003677">
    <property type="term" value="F:DNA binding"/>
    <property type="evidence" value="ECO:0007669"/>
    <property type="project" value="UniProtKB-KW"/>
</dbReference>
<dbReference type="GO" id="GO:0003700">
    <property type="term" value="F:DNA-binding transcription factor activity"/>
    <property type="evidence" value="ECO:0007669"/>
    <property type="project" value="InterPro"/>
</dbReference>
<dbReference type="GO" id="GO:0045892">
    <property type="term" value="P:negative regulation of DNA-templated transcription"/>
    <property type="evidence" value="ECO:0007669"/>
    <property type="project" value="UniProtKB-UniRule"/>
</dbReference>
<dbReference type="FunFam" id="1.10.10.10:FF:000160">
    <property type="entry name" value="HTH-type transcriptional regulator UlaR"/>
    <property type="match status" value="1"/>
</dbReference>
<dbReference type="Gene3D" id="1.10.10.10">
    <property type="entry name" value="Winged helix-like DNA-binding domain superfamily/Winged helix DNA-binding domain"/>
    <property type="match status" value="1"/>
</dbReference>
<dbReference type="HAMAP" id="MF_01563">
    <property type="entry name" value="HTH_type_UlaR"/>
    <property type="match status" value="1"/>
</dbReference>
<dbReference type="InterPro" id="IPR050313">
    <property type="entry name" value="Carb_Metab_HTH_regulators"/>
</dbReference>
<dbReference type="InterPro" id="IPR014036">
    <property type="entry name" value="DeoR-like_C"/>
</dbReference>
<dbReference type="InterPro" id="IPR001034">
    <property type="entry name" value="DeoR_HTH"/>
</dbReference>
<dbReference type="InterPro" id="IPR037171">
    <property type="entry name" value="NagB/RpiA_transferase-like"/>
</dbReference>
<dbReference type="InterPro" id="IPR018356">
    <property type="entry name" value="Tscrpt_reg_HTH_DeoR_CS"/>
</dbReference>
<dbReference type="InterPro" id="IPR023711">
    <property type="entry name" value="Tscrpt_reg_HTH_UlaR"/>
</dbReference>
<dbReference type="InterPro" id="IPR036388">
    <property type="entry name" value="WH-like_DNA-bd_sf"/>
</dbReference>
<dbReference type="InterPro" id="IPR036390">
    <property type="entry name" value="WH_DNA-bd_sf"/>
</dbReference>
<dbReference type="NCBIfam" id="NF010034">
    <property type="entry name" value="PRK13509.1"/>
    <property type="match status" value="1"/>
</dbReference>
<dbReference type="PANTHER" id="PTHR30363">
    <property type="entry name" value="HTH-TYPE TRANSCRIPTIONAL REGULATOR SRLR-RELATED"/>
    <property type="match status" value="1"/>
</dbReference>
<dbReference type="PANTHER" id="PTHR30363:SF55">
    <property type="entry name" value="HTH-TYPE TRANSCRIPTIONAL REGULATOR ULAR"/>
    <property type="match status" value="1"/>
</dbReference>
<dbReference type="Pfam" id="PF00455">
    <property type="entry name" value="DeoRC"/>
    <property type="match status" value="1"/>
</dbReference>
<dbReference type="Pfam" id="PF08220">
    <property type="entry name" value="HTH_DeoR"/>
    <property type="match status" value="1"/>
</dbReference>
<dbReference type="PRINTS" id="PR00037">
    <property type="entry name" value="HTHLACR"/>
</dbReference>
<dbReference type="SMART" id="SM01134">
    <property type="entry name" value="DeoRC"/>
    <property type="match status" value="1"/>
</dbReference>
<dbReference type="SMART" id="SM00420">
    <property type="entry name" value="HTH_DEOR"/>
    <property type="match status" value="1"/>
</dbReference>
<dbReference type="SUPFAM" id="SSF100950">
    <property type="entry name" value="NagB/RpiA/CoA transferase-like"/>
    <property type="match status" value="1"/>
</dbReference>
<dbReference type="SUPFAM" id="SSF46785">
    <property type="entry name" value="Winged helix' DNA-binding domain"/>
    <property type="match status" value="1"/>
</dbReference>
<dbReference type="PROSITE" id="PS00894">
    <property type="entry name" value="HTH_DEOR_1"/>
    <property type="match status" value="1"/>
</dbReference>
<dbReference type="PROSITE" id="PS51000">
    <property type="entry name" value="HTH_DEOR_2"/>
    <property type="match status" value="1"/>
</dbReference>
<organism>
    <name type="scientific">Escherichia coli (strain K12 / DH10B)</name>
    <dbReference type="NCBI Taxonomy" id="316385"/>
    <lineage>
        <taxon>Bacteria</taxon>
        <taxon>Pseudomonadati</taxon>
        <taxon>Pseudomonadota</taxon>
        <taxon>Gammaproteobacteria</taxon>
        <taxon>Enterobacterales</taxon>
        <taxon>Enterobacteriaceae</taxon>
        <taxon>Escherichia</taxon>
    </lineage>
</organism>
<keyword id="KW-0963">Cytoplasm</keyword>
<keyword id="KW-0238">DNA-binding</keyword>
<keyword id="KW-0678">Repressor</keyword>
<keyword id="KW-0804">Transcription</keyword>
<keyword id="KW-0805">Transcription regulation</keyword>